<protein>
    <recommendedName>
        <fullName evidence="7">Type-4 uracil-DNA glycosylase</fullName>
        <ecNumber evidence="2 3">3.2.2.27</ecNumber>
    </recommendedName>
    <alternativeName>
        <fullName evidence="6">TMUDG</fullName>
    </alternativeName>
</protein>
<sequence>MYTREELMEIVSERVKKCTACPLHLNRTNVVVGEGNLDTRIVFVGEGPGEEEDKTGRPFVGRAGMLLTELLRESGIRREDVYICNVVKCRPPNNRTPTPEEQAACGHFLLAQIEIINPDVIVALGATALSFFVDGKKVSITKVRGNPIDWLGGKKVIPTFHPSYLLRNRSNELRRIVLEDIEKAKSFIKKEG</sequence>
<name>UDGA_THEMA</name>
<organism>
    <name type="scientific">Thermotoga maritima (strain ATCC 43589 / DSM 3109 / JCM 10099 / NBRC 100826 / MSB8)</name>
    <dbReference type="NCBI Taxonomy" id="243274"/>
    <lineage>
        <taxon>Bacteria</taxon>
        <taxon>Thermotogati</taxon>
        <taxon>Thermotogota</taxon>
        <taxon>Thermotogae</taxon>
        <taxon>Thermotogales</taxon>
        <taxon>Thermotogaceae</taxon>
        <taxon>Thermotoga</taxon>
    </lineage>
</organism>
<accession>Q9WYY1</accession>
<accession>G4FDW0</accession>
<dbReference type="EC" id="3.2.2.27" evidence="2 3"/>
<dbReference type="EMBL" id="AE000512">
    <property type="protein sequence ID" value="AAD35596.1"/>
    <property type="molecule type" value="Genomic_DNA"/>
</dbReference>
<dbReference type="EMBL" id="CP004077">
    <property type="protein sequence ID" value="AGL49432.1"/>
    <property type="molecule type" value="Genomic_DNA"/>
</dbReference>
<dbReference type="PIR" id="E72368">
    <property type="entry name" value="E72368"/>
</dbReference>
<dbReference type="RefSeq" id="NP_228321.1">
    <property type="nucleotide sequence ID" value="NC_000853.1"/>
</dbReference>
<dbReference type="RefSeq" id="WP_004081422.1">
    <property type="nucleotide sequence ID" value="NC_000853.1"/>
</dbReference>
<dbReference type="PDB" id="1L9G">
    <property type="method" value="X-ray"/>
    <property type="resolution" value="2.50 A"/>
    <property type="chains" value="A=1-192"/>
</dbReference>
<dbReference type="PDB" id="1VK2">
    <property type="method" value="X-ray"/>
    <property type="resolution" value="1.90 A"/>
    <property type="chains" value="A=1-192"/>
</dbReference>
<dbReference type="PDBsum" id="1L9G"/>
<dbReference type="PDBsum" id="1VK2"/>
<dbReference type="SMR" id="Q9WYY1"/>
<dbReference type="STRING" id="243274.TM_0511"/>
<dbReference type="PaxDb" id="243274-THEMA_02120"/>
<dbReference type="DNASU" id="897555"/>
<dbReference type="EnsemblBacteria" id="AAD35596">
    <property type="protein sequence ID" value="AAD35596"/>
    <property type="gene ID" value="TM_0511"/>
</dbReference>
<dbReference type="KEGG" id="tma:TM0511"/>
<dbReference type="KEGG" id="tmi:THEMA_02120"/>
<dbReference type="KEGG" id="tmm:Tmari_0507"/>
<dbReference type="KEGG" id="tmw:THMA_0523"/>
<dbReference type="PATRIC" id="fig|243274.17.peg.509"/>
<dbReference type="eggNOG" id="COG1573">
    <property type="taxonomic scope" value="Bacteria"/>
</dbReference>
<dbReference type="InParanoid" id="Q9WYY1"/>
<dbReference type="OrthoDB" id="5290748at2"/>
<dbReference type="BRENDA" id="3.2.2.27">
    <property type="organism ID" value="6331"/>
</dbReference>
<dbReference type="EvolutionaryTrace" id="Q9WYY1"/>
<dbReference type="Proteomes" id="UP000008183">
    <property type="component" value="Chromosome"/>
</dbReference>
<dbReference type="GO" id="GO:0051539">
    <property type="term" value="F:4 iron, 4 sulfur cluster binding"/>
    <property type="evidence" value="ECO:0007669"/>
    <property type="project" value="UniProtKB-KW"/>
</dbReference>
<dbReference type="GO" id="GO:0046872">
    <property type="term" value="F:metal ion binding"/>
    <property type="evidence" value="ECO:0007669"/>
    <property type="project" value="UniProtKB-KW"/>
</dbReference>
<dbReference type="GO" id="GO:0004844">
    <property type="term" value="F:uracil DNA N-glycosylase activity"/>
    <property type="evidence" value="ECO:0000314"/>
    <property type="project" value="UniProtKB"/>
</dbReference>
<dbReference type="GO" id="GO:0006281">
    <property type="term" value="P:DNA repair"/>
    <property type="evidence" value="ECO:0000314"/>
    <property type="project" value="UniProtKB"/>
</dbReference>
<dbReference type="CDD" id="cd10030">
    <property type="entry name" value="UDG-F4_TTUDGA_SPO1dp_like"/>
    <property type="match status" value="1"/>
</dbReference>
<dbReference type="FunFam" id="3.40.470.10:FF:000025">
    <property type="entry name" value="Type-4 uracil-DNA glycosylase"/>
    <property type="match status" value="1"/>
</dbReference>
<dbReference type="Gene3D" id="3.40.470.10">
    <property type="entry name" value="Uracil-DNA glycosylase-like domain"/>
    <property type="match status" value="1"/>
</dbReference>
<dbReference type="InterPro" id="IPR051536">
    <property type="entry name" value="UDG_Type-4/5"/>
</dbReference>
<dbReference type="InterPro" id="IPR005273">
    <property type="entry name" value="Ura-DNA_glyco_family4"/>
</dbReference>
<dbReference type="InterPro" id="IPR005122">
    <property type="entry name" value="Uracil-DNA_glycosylase-like"/>
</dbReference>
<dbReference type="InterPro" id="IPR036895">
    <property type="entry name" value="Uracil-DNA_glycosylase-like_sf"/>
</dbReference>
<dbReference type="NCBIfam" id="TIGR00758">
    <property type="entry name" value="UDG_fam4"/>
    <property type="match status" value="1"/>
</dbReference>
<dbReference type="PANTHER" id="PTHR33693:SF1">
    <property type="entry name" value="TYPE-4 URACIL-DNA GLYCOSYLASE"/>
    <property type="match status" value="1"/>
</dbReference>
<dbReference type="PANTHER" id="PTHR33693">
    <property type="entry name" value="TYPE-5 URACIL-DNA GLYCOSYLASE"/>
    <property type="match status" value="1"/>
</dbReference>
<dbReference type="Pfam" id="PF03167">
    <property type="entry name" value="UDG"/>
    <property type="match status" value="1"/>
</dbReference>
<dbReference type="SMART" id="SM00986">
    <property type="entry name" value="UDG"/>
    <property type="match status" value="1"/>
</dbReference>
<dbReference type="SMART" id="SM00987">
    <property type="entry name" value="UreE_C"/>
    <property type="match status" value="1"/>
</dbReference>
<dbReference type="SUPFAM" id="SSF52141">
    <property type="entry name" value="Uracil-DNA glycosylase-like"/>
    <property type="match status" value="1"/>
</dbReference>
<gene>
    <name evidence="6" type="primary">tmung</name>
    <name evidence="8" type="ordered locus">TM_0511</name>
    <name evidence="9" type="ORF">Tmari_0507</name>
</gene>
<comment type="function">
    <text evidence="2 3">Removes uracil bases that are present in DNA as a result of either deamination of cytosine or misincorporation of dUMP instead of dTMP. Can remove uracil from double-stranded DNA containing either a U/G or U/A base pair as well as from single-stranded DNA.</text>
</comment>
<comment type="catalytic activity">
    <reaction evidence="2 3">
        <text>Hydrolyzes single-stranded DNA or mismatched double-stranded DNA and polynucleotides, releasing free uracil.</text>
        <dbReference type="EC" id="3.2.2.27"/>
    </reaction>
</comment>
<comment type="biophysicochemical properties">
    <temperatureDependence>
        <text evidence="3">Remains fully active after heating 15 minutes at 85 degrees Celsius. Completely inactive after 15 minutes of pre-incubation at 95 degrees Celsius.</text>
    </temperatureDependence>
</comment>
<comment type="domain">
    <text evidence="3">The seven N-terminal amino acids are important for maintaining proper protein folding and increase temperature stability of the protein.</text>
</comment>
<comment type="similarity">
    <text evidence="7">Belongs to the uracil-DNA glycosylase (UDG) superfamily. Type 4 (UDGa) family.</text>
</comment>
<evidence type="ECO:0000250" key="1">
    <source>
        <dbReference type="UniProtKB" id="Q5SKC5"/>
    </source>
</evidence>
<evidence type="ECO:0000269" key="2">
    <source>
    </source>
</evidence>
<evidence type="ECO:0000269" key="3">
    <source>
    </source>
</evidence>
<evidence type="ECO:0000269" key="4">
    <source ref="5"/>
</evidence>
<evidence type="ECO:0000269" key="5">
    <source ref="6"/>
</evidence>
<evidence type="ECO:0000303" key="6">
    <source>
    </source>
</evidence>
<evidence type="ECO:0000305" key="7"/>
<evidence type="ECO:0000312" key="8">
    <source>
        <dbReference type="EMBL" id="AAD35596.1"/>
    </source>
</evidence>
<evidence type="ECO:0000312" key="9">
    <source>
        <dbReference type="EMBL" id="AGL49432.1"/>
    </source>
</evidence>
<evidence type="ECO:0007744" key="10">
    <source>
        <dbReference type="PDB" id="1L9G"/>
    </source>
</evidence>
<evidence type="ECO:0007744" key="11">
    <source>
        <dbReference type="PDB" id="1VK2"/>
    </source>
</evidence>
<evidence type="ECO:0007829" key="12">
    <source>
        <dbReference type="PDB" id="1VK2"/>
    </source>
</evidence>
<feature type="chain" id="PRO_0000439181" description="Type-4 uracil-DNA glycosylase">
    <location>
        <begin position="1"/>
        <end position="192"/>
    </location>
</feature>
<feature type="binding site" evidence="4 5 10 11">
    <location>
        <position position="18"/>
    </location>
    <ligand>
        <name>[4Fe-4S] cluster</name>
        <dbReference type="ChEBI" id="CHEBI:49883"/>
    </ligand>
</feature>
<feature type="binding site" evidence="4 5 10 11">
    <location>
        <position position="21"/>
    </location>
    <ligand>
        <name>[4Fe-4S] cluster</name>
        <dbReference type="ChEBI" id="CHEBI:49883"/>
    </ligand>
</feature>
<feature type="binding site" evidence="1">
    <location>
        <begin position="45"/>
        <end position="47"/>
    </location>
    <ligand>
        <name>uracil</name>
        <dbReference type="ChEBI" id="CHEBI:17568"/>
    </ligand>
</feature>
<feature type="binding site" evidence="1">
    <location>
        <position position="59"/>
    </location>
    <ligand>
        <name>uracil</name>
        <dbReference type="ChEBI" id="CHEBI:17568"/>
    </ligand>
</feature>
<feature type="binding site" evidence="1">
    <location>
        <position position="85"/>
    </location>
    <ligand>
        <name>uracil</name>
        <dbReference type="ChEBI" id="CHEBI:17568"/>
    </ligand>
</feature>
<feature type="binding site" evidence="4 5 10 11">
    <location>
        <position position="89"/>
    </location>
    <ligand>
        <name>[4Fe-4S] cluster</name>
        <dbReference type="ChEBI" id="CHEBI:49883"/>
    </ligand>
</feature>
<feature type="binding site" evidence="4 5 10 11">
    <location>
        <position position="105"/>
    </location>
    <ligand>
        <name>[4Fe-4S] cluster</name>
        <dbReference type="ChEBI" id="CHEBI:49883"/>
    </ligand>
</feature>
<feature type="binding site" evidence="1">
    <location>
        <position position="161"/>
    </location>
    <ligand>
        <name>uracil</name>
        <dbReference type="ChEBI" id="CHEBI:17568"/>
    </ligand>
</feature>
<feature type="helix" evidence="12">
    <location>
        <begin position="4"/>
        <end position="17"/>
    </location>
</feature>
<feature type="helix" evidence="12">
    <location>
        <begin position="22"/>
        <end position="25"/>
    </location>
</feature>
<feature type="strand" evidence="12">
    <location>
        <begin position="40"/>
        <end position="46"/>
    </location>
</feature>
<feature type="helix" evidence="12">
    <location>
        <begin position="50"/>
        <end position="55"/>
    </location>
</feature>
<feature type="helix" evidence="12">
    <location>
        <begin position="62"/>
        <end position="73"/>
    </location>
</feature>
<feature type="helix" evidence="12">
    <location>
        <begin position="78"/>
        <end position="80"/>
    </location>
</feature>
<feature type="strand" evidence="12">
    <location>
        <begin position="81"/>
        <end position="86"/>
    </location>
</feature>
<feature type="helix" evidence="12">
    <location>
        <begin position="92"/>
        <end position="94"/>
    </location>
</feature>
<feature type="helix" evidence="12">
    <location>
        <begin position="99"/>
        <end position="116"/>
    </location>
</feature>
<feature type="strand" evidence="12">
    <location>
        <begin position="119"/>
        <end position="125"/>
    </location>
</feature>
<feature type="helix" evidence="12">
    <location>
        <begin position="126"/>
        <end position="131"/>
    </location>
</feature>
<feature type="turn" evidence="12">
    <location>
        <begin position="132"/>
        <end position="135"/>
    </location>
</feature>
<feature type="helix" evidence="12">
    <location>
        <begin position="140"/>
        <end position="143"/>
    </location>
</feature>
<feature type="helix" evidence="12">
    <location>
        <begin position="151"/>
        <end position="153"/>
    </location>
</feature>
<feature type="strand" evidence="12">
    <location>
        <begin position="155"/>
        <end position="159"/>
    </location>
</feature>
<feature type="helix" evidence="12">
    <location>
        <begin position="162"/>
        <end position="167"/>
    </location>
</feature>
<feature type="helix" evidence="12">
    <location>
        <begin position="171"/>
        <end position="185"/>
    </location>
</feature>
<keyword id="KW-0002">3D-structure</keyword>
<keyword id="KW-0004">4Fe-4S</keyword>
<keyword id="KW-0227">DNA damage</keyword>
<keyword id="KW-0234">DNA repair</keyword>
<keyword id="KW-0378">Hydrolase</keyword>
<keyword id="KW-0408">Iron</keyword>
<keyword id="KW-0411">Iron-sulfur</keyword>
<keyword id="KW-0479">Metal-binding</keyword>
<keyword id="KW-1185">Reference proteome</keyword>
<proteinExistence type="evidence at protein level"/>
<reference key="1">
    <citation type="journal article" date="1999" name="Nature">
        <title>Evidence for lateral gene transfer between Archaea and Bacteria from genome sequence of Thermotoga maritima.</title>
        <authorList>
            <person name="Nelson K.E."/>
            <person name="Clayton R.A."/>
            <person name="Gill S.R."/>
            <person name="Gwinn M.L."/>
            <person name="Dodson R.J."/>
            <person name="Haft D.H."/>
            <person name="Hickey E.K."/>
            <person name="Peterson J.D."/>
            <person name="Nelson W.C."/>
            <person name="Ketchum K.A."/>
            <person name="McDonald L.A."/>
            <person name="Utterback T.R."/>
            <person name="Malek J.A."/>
            <person name="Linher K.D."/>
            <person name="Garrett M.M."/>
            <person name="Stewart A.M."/>
            <person name="Cotton M.D."/>
            <person name="Pratt M.S."/>
            <person name="Phillips C.A."/>
            <person name="Richardson D.L."/>
            <person name="Heidelberg J.F."/>
            <person name="Sutton G.G."/>
            <person name="Fleischmann R.D."/>
            <person name="Eisen J.A."/>
            <person name="White O."/>
            <person name="Salzberg S.L."/>
            <person name="Smith H.O."/>
            <person name="Venter J.C."/>
            <person name="Fraser C.M."/>
        </authorList>
    </citation>
    <scope>NUCLEOTIDE SEQUENCE [LARGE SCALE GENOMIC DNA]</scope>
    <source>
        <strain>ATCC 43589 / DSM 3109 / JCM 10099 / NBRC 100826 / MSB8</strain>
    </source>
</reference>
<reference key="2">
    <citation type="journal article" date="2013" name="PLoS Genet.">
        <title>The genome organization of Thermotoga maritima reflects its lifestyle.</title>
        <authorList>
            <person name="Latif H."/>
            <person name="Lerman J.A."/>
            <person name="Portnoy V.A."/>
            <person name="Tarasova Y."/>
            <person name="Nagarajan H."/>
            <person name="Schrimpe-Rutledge A.C."/>
            <person name="Smith R.D."/>
            <person name="Adkins J.N."/>
            <person name="Lee D.H."/>
            <person name="Qiu Y."/>
            <person name="Zengler K."/>
        </authorList>
    </citation>
    <scope>NUCLEOTIDE SEQUENCE [LARGE SCALE GENOMIC DNA]</scope>
    <source>
        <strain>ATCC 43589 / DSM 3109 / JCM 10099 / NBRC 100826 / MSB8</strain>
    </source>
</reference>
<reference key="3">
    <citation type="journal article" date="1999" name="Curr. Biol.">
        <title>Thermostable uracil-DNA glycosylase from Thermotoga maritima a member of a novel class of DNA repair enzymes.</title>
        <authorList>
            <person name="Sandigursky M."/>
            <person name="Franklin W.A."/>
        </authorList>
    </citation>
    <scope>FUNCTION</scope>
    <scope>CATALYTIC ACTIVITY</scope>
    <source>
        <strain>ATCC 43589 / DSM 3109 / JCM 10099 / NBRC 100826 / MSB8</strain>
    </source>
</reference>
<reference key="4">
    <citation type="journal article" date="2001" name="Mutat. Res.">
        <title>Characterization of the full length uracil-DNA glycosylase in the extreme thermophile Thermotoga maritima.</title>
        <authorList>
            <person name="Sandigursky M."/>
            <person name="Faje A."/>
            <person name="Franklin W.A."/>
        </authorList>
    </citation>
    <scope>FUNCTION</scope>
    <scope>CATALYTIC ACTIVITY</scope>
    <scope>BIOPHYSICOCHEMICAL PROPERTIES</scope>
    <scope>DOMAIN</scope>
    <source>
        <strain>ATCC 43589 / DSM 3109 / JCM 10099 / NBRC 100826 / MSB8</strain>
    </source>
</reference>
<reference evidence="10" key="5">
    <citation type="submission" date="2002-03" db="PDB data bank">
        <title>Crystal structure of uracil-DNA glycosylase from T. maritima.</title>
        <authorList>
            <person name="Rajashankar K.R."/>
            <person name="Dodatko T."/>
            <person name="Thirumuruhan R.A."/>
            <person name="Sandigursky M."/>
            <person name="Bresnik A."/>
            <person name="Chance M.R."/>
            <person name="Franklin W.A."/>
            <person name="Almo S.C."/>
        </authorList>
    </citation>
    <scope>X-RAY CRYSTALLOGRAPHY (2.50 ANGSTROMS) IN COMPLEX WITH IRON-SULFUR (4FE-4S)</scope>
</reference>
<reference evidence="11" key="6">
    <citation type="submission" date="2004-04" db="PDB data bank">
        <title>Crystal structure of uracil-DNA glycosylase (TM0511) from Thermotoga maritima at 1.90 A resolution.</title>
        <authorList>
            <consortium name="Joint center for structural genomics (JCSG)"/>
        </authorList>
    </citation>
    <scope>X-RAY CRYSTALLOGRAPHY (1.90 ANGSTROMS) IN COMPLEX WITH IRON-SULFUR (4FE-4S)</scope>
</reference>